<gene>
    <name evidence="7" type="primary">RGTB1</name>
    <name evidence="9" type="ordered locus">At5g12210</name>
    <name evidence="10" type="ORF">MXC9.17</name>
</gene>
<feature type="initiator methionine" description="Removed" evidence="11">
    <location>
        <position position="1"/>
    </location>
</feature>
<feature type="chain" id="PRO_0000436611" description="Geranylgeranyl transferase type-2 subunit beta 1">
    <location>
        <begin position="2"/>
        <end position="321"/>
    </location>
</feature>
<feature type="repeat" description="PFTB 1" evidence="3">
    <location>
        <begin position="14"/>
        <end position="55"/>
    </location>
</feature>
<feature type="repeat" description="PFTB 2" evidence="3">
    <location>
        <begin position="62"/>
        <end position="103"/>
    </location>
</feature>
<feature type="repeat" description="PFTB 3" evidence="3">
    <location>
        <begin position="110"/>
        <end position="151"/>
    </location>
</feature>
<feature type="repeat" description="PFTB 4" evidence="3">
    <location>
        <begin position="158"/>
        <end position="199"/>
    </location>
</feature>
<feature type="repeat" description="PFTB 5" evidence="3">
    <location>
        <begin position="206"/>
        <end position="247"/>
    </location>
</feature>
<feature type="repeat" description="PFTB 6" evidence="3">
    <location>
        <begin position="254"/>
        <end position="296"/>
    </location>
</feature>
<feature type="binding site" evidence="2">
    <location>
        <begin position="184"/>
        <end position="186"/>
    </location>
    <ligand>
        <name>geranylgeranyl diphosphate</name>
        <dbReference type="ChEBI" id="CHEBI:57533"/>
    </ligand>
</feature>
<feature type="binding site" evidence="2">
    <location>
        <begin position="226"/>
        <end position="229"/>
    </location>
    <ligand>
        <name>geranylgeranyl diphosphate</name>
        <dbReference type="ChEBI" id="CHEBI:57533"/>
    </ligand>
</feature>
<feature type="binding site" evidence="2">
    <location>
        <position position="232"/>
    </location>
    <ligand>
        <name>Zn(2+)</name>
        <dbReference type="ChEBI" id="CHEBI:29105"/>
        <note>catalytic</note>
    </ligand>
</feature>
<feature type="binding site" evidence="2">
    <location>
        <position position="234"/>
    </location>
    <ligand>
        <name>Zn(2+)</name>
        <dbReference type="ChEBI" id="CHEBI:29105"/>
        <note>catalytic</note>
    </ligand>
</feature>
<feature type="binding site" evidence="2">
    <location>
        <begin position="235"/>
        <end position="238"/>
    </location>
    <ligand>
        <name>geranylgeranyl diphosphate</name>
        <dbReference type="ChEBI" id="CHEBI:57533"/>
    </ligand>
</feature>
<feature type="binding site" evidence="2">
    <location>
        <position position="284"/>
    </location>
    <ligand>
        <name>Zn(2+)</name>
        <dbReference type="ChEBI" id="CHEBI:29105"/>
        <note>catalytic</note>
    </ligand>
</feature>
<feature type="modified residue" description="N-acetylserine" evidence="11">
    <location>
        <position position="2"/>
    </location>
</feature>
<keyword id="KW-0007">Acetylation</keyword>
<keyword id="KW-0025">Alternative splicing</keyword>
<keyword id="KW-0460">Magnesium</keyword>
<keyword id="KW-0479">Metal-binding</keyword>
<keyword id="KW-0637">Prenyltransferase</keyword>
<keyword id="KW-1185">Reference proteome</keyword>
<keyword id="KW-0677">Repeat</keyword>
<keyword id="KW-0808">Transferase</keyword>
<keyword id="KW-0862">Zinc</keyword>
<evidence type="ECO:0000250" key="1">
    <source>
        <dbReference type="UniProtKB" id="P18898"/>
    </source>
</evidence>
<evidence type="ECO:0000250" key="2">
    <source>
        <dbReference type="UniProtKB" id="P53610"/>
    </source>
</evidence>
<evidence type="ECO:0000255" key="3"/>
<evidence type="ECO:0000269" key="4">
    <source>
    </source>
</evidence>
<evidence type="ECO:0000269" key="5">
    <source>
    </source>
</evidence>
<evidence type="ECO:0000269" key="6">
    <source>
    </source>
</evidence>
<evidence type="ECO:0000303" key="7">
    <source>
    </source>
</evidence>
<evidence type="ECO:0000305" key="8"/>
<evidence type="ECO:0000312" key="9">
    <source>
        <dbReference type="Araport" id="AT5G12210"/>
    </source>
</evidence>
<evidence type="ECO:0000312" key="10">
    <source>
        <dbReference type="EMBL" id="BAB10039.1"/>
    </source>
</evidence>
<evidence type="ECO:0007744" key="11">
    <source>
    </source>
</evidence>
<reference key="1">
    <citation type="journal article" date="1997" name="DNA Res.">
        <title>Structural analysis of Arabidopsis thaliana chromosome 5. III. Sequence features of the regions of 1,191,918 bp covered by seventeen physically assigned P1 clones.</title>
        <authorList>
            <person name="Nakamura Y."/>
            <person name="Sato S."/>
            <person name="Kaneko T."/>
            <person name="Kotani H."/>
            <person name="Asamizu E."/>
            <person name="Miyajima N."/>
            <person name="Tabata S."/>
        </authorList>
    </citation>
    <scope>NUCLEOTIDE SEQUENCE [LARGE SCALE GENOMIC DNA]</scope>
    <source>
        <strain>cv. Columbia</strain>
    </source>
</reference>
<reference key="2">
    <citation type="journal article" date="2017" name="Plant J.">
        <title>Araport11: a complete reannotation of the Arabidopsis thaliana reference genome.</title>
        <authorList>
            <person name="Cheng C.Y."/>
            <person name="Krishnakumar V."/>
            <person name="Chan A.P."/>
            <person name="Thibaud-Nissen F."/>
            <person name="Schobel S."/>
            <person name="Town C.D."/>
        </authorList>
    </citation>
    <scope>GENOME REANNOTATION</scope>
    <source>
        <strain>cv. Columbia</strain>
    </source>
</reference>
<reference key="3">
    <citation type="journal article" date="2003" name="Science">
        <title>Empirical analysis of transcriptional activity in the Arabidopsis genome.</title>
        <authorList>
            <person name="Yamada K."/>
            <person name="Lim J."/>
            <person name="Dale J.M."/>
            <person name="Chen H."/>
            <person name="Shinn P."/>
            <person name="Palm C.J."/>
            <person name="Southwick A.M."/>
            <person name="Wu H.C."/>
            <person name="Kim C.J."/>
            <person name="Nguyen M."/>
            <person name="Pham P.K."/>
            <person name="Cheuk R.F."/>
            <person name="Karlin-Newmann G."/>
            <person name="Liu S.X."/>
            <person name="Lam B."/>
            <person name="Sakano H."/>
            <person name="Wu T."/>
            <person name="Yu G."/>
            <person name="Miranda M."/>
            <person name="Quach H.L."/>
            <person name="Tripp M."/>
            <person name="Chang C.H."/>
            <person name="Lee J.M."/>
            <person name="Toriumi M.J."/>
            <person name="Chan M.M."/>
            <person name="Tang C.C."/>
            <person name="Onodera C.S."/>
            <person name="Deng J.M."/>
            <person name="Akiyama K."/>
            <person name="Ansari Y."/>
            <person name="Arakawa T."/>
            <person name="Banh J."/>
            <person name="Banno F."/>
            <person name="Bowser L."/>
            <person name="Brooks S.Y."/>
            <person name="Carninci P."/>
            <person name="Chao Q."/>
            <person name="Choy N."/>
            <person name="Enju A."/>
            <person name="Goldsmith A.D."/>
            <person name="Gurjal M."/>
            <person name="Hansen N.F."/>
            <person name="Hayashizaki Y."/>
            <person name="Johnson-Hopson C."/>
            <person name="Hsuan V.W."/>
            <person name="Iida K."/>
            <person name="Karnes M."/>
            <person name="Khan S."/>
            <person name="Koesema E."/>
            <person name="Ishida J."/>
            <person name="Jiang P.X."/>
            <person name="Jones T."/>
            <person name="Kawai J."/>
            <person name="Kamiya A."/>
            <person name="Meyers C."/>
            <person name="Nakajima M."/>
            <person name="Narusaka M."/>
            <person name="Seki M."/>
            <person name="Sakurai T."/>
            <person name="Satou M."/>
            <person name="Tamse R."/>
            <person name="Vaysberg M."/>
            <person name="Wallender E.K."/>
            <person name="Wong C."/>
            <person name="Yamamura Y."/>
            <person name="Yuan S."/>
            <person name="Shinozaki K."/>
            <person name="Davis R.W."/>
            <person name="Theologis A."/>
            <person name="Ecker J.R."/>
        </authorList>
    </citation>
    <scope>NUCLEOTIDE SEQUENCE [LARGE SCALE MRNA]</scope>
    <source>
        <strain>cv. Columbia</strain>
    </source>
</reference>
<reference key="4">
    <citation type="submission" date="2006-07" db="EMBL/GenBank/DDBJ databases">
        <title>Large-scale analysis of RIKEN Arabidopsis full-length (RAFL) cDNAs.</title>
        <authorList>
            <person name="Totoki Y."/>
            <person name="Seki M."/>
            <person name="Ishida J."/>
            <person name="Nakajima M."/>
            <person name="Enju A."/>
            <person name="Kamiya A."/>
            <person name="Narusaka M."/>
            <person name="Shin-i T."/>
            <person name="Nakagawa M."/>
            <person name="Sakamoto N."/>
            <person name="Oishi K."/>
            <person name="Kohara Y."/>
            <person name="Kobayashi M."/>
            <person name="Toyoda A."/>
            <person name="Sakaki Y."/>
            <person name="Sakurai T."/>
            <person name="Iida K."/>
            <person name="Akiyama K."/>
            <person name="Satou M."/>
            <person name="Toyoda T."/>
            <person name="Konagaya A."/>
            <person name="Carninci P."/>
            <person name="Kawai J."/>
            <person name="Hayashizaki Y."/>
            <person name="Shinozaki K."/>
        </authorList>
    </citation>
    <scope>NUCLEOTIDE SEQUENCE [LARGE SCALE MRNA]</scope>
    <source>
        <strain>cv. Columbia</strain>
    </source>
</reference>
<reference key="5">
    <citation type="submission" date="2002-03" db="EMBL/GenBank/DDBJ databases">
        <title>Full-length cDNA from Arabidopsis thaliana.</title>
        <authorList>
            <person name="Brover V.V."/>
            <person name="Troukhan M.E."/>
            <person name="Alexandrov N.A."/>
            <person name="Lu Y.-P."/>
            <person name="Flavell R.B."/>
            <person name="Feldmann K.A."/>
        </authorList>
    </citation>
    <scope>NUCLEOTIDE SEQUENCE [LARGE SCALE MRNA]</scope>
</reference>
<reference key="6">
    <citation type="journal article" date="2010" name="Plant J.">
        <title>Arabidopsis RAB geranylgeranyl transferase beta-subunit mutant is constitutively photomorphogenic, and has shoot growth and gravitropic defects.</title>
        <authorList>
            <person name="Hala M."/>
            <person name="Soukupova H."/>
            <person name="Synek L."/>
            <person name="Zarsky V."/>
        </authorList>
    </citation>
    <scope>FUNCTION</scope>
    <scope>DISRUPTION PHENOTYPE</scope>
</reference>
<reference key="7">
    <citation type="journal article" date="2012" name="Mol. Cell. Proteomics">
        <title>Comparative large-scale characterisation of plant vs. mammal proteins reveals similar and idiosyncratic N-alpha acetylation features.</title>
        <authorList>
            <person name="Bienvenut W.V."/>
            <person name="Sumpton D."/>
            <person name="Martinez A."/>
            <person name="Lilla S."/>
            <person name="Espagne C."/>
            <person name="Meinnel T."/>
            <person name="Giglione C."/>
        </authorList>
    </citation>
    <scope>ACETYLATION [LARGE SCALE ANALYSIS] AT SER-2</scope>
    <scope>CLEAVAGE OF INITIATOR METHIONINE [LARGE SCALE ANALYSIS]</scope>
    <scope>IDENTIFICATION BY MASS SPECTROMETRY [LARGE SCALE ANALYSIS]</scope>
</reference>
<reference key="8">
    <citation type="journal article" date="2015" name="J. Exp. Bot.">
        <title>Rab geranylgeranyl transferase beta subunit is essential for male fertility and tip growth in Arabidopsis.</title>
        <authorList>
            <person name="Gutkowska M."/>
            <person name="Wnuk M."/>
            <person name="Nowakowska J."/>
            <person name="Lichocka M."/>
            <person name="Stronkowski M.M."/>
            <person name="Swiezewska E."/>
        </authorList>
    </citation>
    <scope>FUNCTION</scope>
    <scope>DISRUPTION PHENOTYPE</scope>
</reference>
<reference key="9">
    <citation type="journal article" date="2016" name="J. Biol. Chem.">
        <title>Arabidopsis Rab geranylgeranyltransferases demonstrate redundancy and broad substrate specificity in vitro.</title>
        <authorList>
            <person name="Shi W."/>
            <person name="Zeng Q."/>
            <person name="Kunkel B.N."/>
            <person name="Running M.P."/>
        </authorList>
    </citation>
    <scope>FUNCTION</scope>
    <scope>CATALYTIC ACTIVITY</scope>
    <scope>ACTIVITY REGULATION</scope>
    <scope>SUBUNIT</scope>
</reference>
<protein>
    <recommendedName>
        <fullName evidence="8">Geranylgeranyl transferase type-2 subunit beta 1</fullName>
        <ecNumber evidence="4">2.5.1.60</ecNumber>
    </recommendedName>
    <alternativeName>
        <fullName evidence="8">Geranylgeranyl transferase type II subunit beta 1</fullName>
    </alternativeName>
    <alternativeName>
        <fullName evidence="7">Rab geranylgeranyl transferase beta subunit 1</fullName>
        <shortName evidence="7">AtRGTB1</shortName>
        <shortName evidence="8">Rab-GGT beta 1</shortName>
    </alternativeName>
</protein>
<dbReference type="EC" id="2.5.1.60" evidence="4"/>
<dbReference type="EMBL" id="AB007727">
    <property type="protein sequence ID" value="BAB10039.1"/>
    <property type="status" value="ALT_INIT"/>
    <property type="molecule type" value="Genomic_DNA"/>
</dbReference>
<dbReference type="EMBL" id="CP002688">
    <property type="protein sequence ID" value="AED91774.1"/>
    <property type="molecule type" value="Genomic_DNA"/>
</dbReference>
<dbReference type="EMBL" id="BT004816">
    <property type="protein sequence ID" value="AAO44082.1"/>
    <property type="molecule type" value="mRNA"/>
</dbReference>
<dbReference type="EMBL" id="BT004818">
    <property type="protein sequence ID" value="AAO44084.1"/>
    <property type="molecule type" value="mRNA"/>
</dbReference>
<dbReference type="EMBL" id="AK227802">
    <property type="protein sequence ID" value="BAE99784.1"/>
    <property type="molecule type" value="mRNA"/>
</dbReference>
<dbReference type="EMBL" id="AY088429">
    <property type="protein sequence ID" value="AAM65965.1"/>
    <property type="status" value="ALT_INIT"/>
    <property type="molecule type" value="mRNA"/>
</dbReference>
<dbReference type="RefSeq" id="NP_568259.1">
    <molecule id="Q84J75-1"/>
    <property type="nucleotide sequence ID" value="NM_121259.4"/>
</dbReference>
<dbReference type="SMR" id="Q84J75"/>
<dbReference type="FunCoup" id="Q84J75">
    <property type="interactions" value="2721"/>
</dbReference>
<dbReference type="STRING" id="3702.Q84J75"/>
<dbReference type="iPTMnet" id="Q84J75"/>
<dbReference type="PaxDb" id="3702-AT5G12210.1"/>
<dbReference type="ProteomicsDB" id="236787">
    <molecule id="Q84J75-1"/>
</dbReference>
<dbReference type="EnsemblPlants" id="AT5G12210.1">
    <molecule id="Q84J75-1"/>
    <property type="protein sequence ID" value="AT5G12210.1"/>
    <property type="gene ID" value="AT5G12210"/>
</dbReference>
<dbReference type="GeneID" id="831094"/>
<dbReference type="Gramene" id="AT5G12210.1">
    <molecule id="Q84J75-1"/>
    <property type="protein sequence ID" value="AT5G12210.1"/>
    <property type="gene ID" value="AT5G12210"/>
</dbReference>
<dbReference type="KEGG" id="ath:AT5G12210"/>
<dbReference type="Araport" id="AT5G12210"/>
<dbReference type="TAIR" id="AT5G12210">
    <property type="gene designation" value="RGTB1"/>
</dbReference>
<dbReference type="eggNOG" id="KOG0366">
    <property type="taxonomic scope" value="Eukaryota"/>
</dbReference>
<dbReference type="InParanoid" id="Q84J75"/>
<dbReference type="OrthoDB" id="5428259at2759"/>
<dbReference type="PhylomeDB" id="Q84J75"/>
<dbReference type="BRENDA" id="2.5.1.60">
    <property type="organism ID" value="399"/>
</dbReference>
<dbReference type="PRO" id="PR:Q84J75"/>
<dbReference type="Proteomes" id="UP000006548">
    <property type="component" value="Chromosome 5"/>
</dbReference>
<dbReference type="ExpressionAtlas" id="Q84J75">
    <property type="expression patterns" value="baseline and differential"/>
</dbReference>
<dbReference type="GO" id="GO:0005968">
    <property type="term" value="C:Rab-protein geranylgeranyltransferase complex"/>
    <property type="evidence" value="ECO:0000314"/>
    <property type="project" value="UniProtKB"/>
</dbReference>
<dbReference type="GO" id="GO:0046872">
    <property type="term" value="F:metal ion binding"/>
    <property type="evidence" value="ECO:0007669"/>
    <property type="project" value="UniProtKB-KW"/>
</dbReference>
<dbReference type="GO" id="GO:0004663">
    <property type="term" value="F:Rab geranylgeranyltransferase activity"/>
    <property type="evidence" value="ECO:0000314"/>
    <property type="project" value="UniProtKB"/>
</dbReference>
<dbReference type="GO" id="GO:0010315">
    <property type="term" value="P:auxin export across the plasma membrane"/>
    <property type="evidence" value="ECO:0000315"/>
    <property type="project" value="TAIR"/>
</dbReference>
<dbReference type="GO" id="GO:0009793">
    <property type="term" value="P:embryo development ending in seed dormancy"/>
    <property type="evidence" value="ECO:0000315"/>
    <property type="project" value="TAIR"/>
</dbReference>
<dbReference type="GO" id="GO:0009553">
    <property type="term" value="P:embryo sac development"/>
    <property type="evidence" value="ECO:0000315"/>
    <property type="project" value="TAIR"/>
</dbReference>
<dbReference type="GO" id="GO:0009960">
    <property type="term" value="P:endosperm development"/>
    <property type="evidence" value="ECO:0000315"/>
    <property type="project" value="TAIR"/>
</dbReference>
<dbReference type="GO" id="GO:0009555">
    <property type="term" value="P:pollen development"/>
    <property type="evidence" value="ECO:0000315"/>
    <property type="project" value="UniProtKB"/>
</dbReference>
<dbReference type="GO" id="GO:0010183">
    <property type="term" value="P:pollen tube guidance"/>
    <property type="evidence" value="ECO:0000315"/>
    <property type="project" value="TAIR"/>
</dbReference>
<dbReference type="GO" id="GO:0140301">
    <property type="term" value="P:pollen-stigma interaction"/>
    <property type="evidence" value="ECO:0000315"/>
    <property type="project" value="TAIR"/>
</dbReference>
<dbReference type="GO" id="GO:0018344">
    <property type="term" value="P:protein geranylgeranylation"/>
    <property type="evidence" value="ECO:0000314"/>
    <property type="project" value="UniProtKB"/>
</dbReference>
<dbReference type="GO" id="GO:0048364">
    <property type="term" value="P:root development"/>
    <property type="evidence" value="ECO:0000315"/>
    <property type="project" value="UniProtKB"/>
</dbReference>
<dbReference type="GO" id="GO:0010214">
    <property type="term" value="P:seed coat development"/>
    <property type="evidence" value="ECO:0000315"/>
    <property type="project" value="TAIR"/>
</dbReference>
<dbReference type="GO" id="GO:0048316">
    <property type="term" value="P:seed development"/>
    <property type="evidence" value="ECO:0000315"/>
    <property type="project" value="TAIR"/>
</dbReference>
<dbReference type="CDD" id="cd02894">
    <property type="entry name" value="GGTase-II"/>
    <property type="match status" value="1"/>
</dbReference>
<dbReference type="FunFam" id="1.50.10.20:FF:000009">
    <property type="entry name" value="Geranylgeranyl transferase type-2 subunit beta"/>
    <property type="match status" value="1"/>
</dbReference>
<dbReference type="Gene3D" id="1.50.10.20">
    <property type="match status" value="1"/>
</dbReference>
<dbReference type="InterPro" id="IPR045089">
    <property type="entry name" value="PGGT1B-like"/>
</dbReference>
<dbReference type="InterPro" id="IPR001330">
    <property type="entry name" value="Prenyltrans"/>
</dbReference>
<dbReference type="InterPro" id="IPR026873">
    <property type="entry name" value="Ptb1"/>
</dbReference>
<dbReference type="InterPro" id="IPR008930">
    <property type="entry name" value="Terpenoid_cyclase/PrenylTrfase"/>
</dbReference>
<dbReference type="PANTHER" id="PTHR11774">
    <property type="entry name" value="GERANYLGERANYL TRANSFERASE TYPE BETA SUBUNIT"/>
    <property type="match status" value="1"/>
</dbReference>
<dbReference type="PANTHER" id="PTHR11774:SF16">
    <property type="entry name" value="GERANYLGERANYL TRANSFERASE TYPE-2 SUBUNIT BETA 1-RELATED"/>
    <property type="match status" value="1"/>
</dbReference>
<dbReference type="Pfam" id="PF00432">
    <property type="entry name" value="Prenyltrans"/>
    <property type="match status" value="1"/>
</dbReference>
<dbReference type="SUPFAM" id="SSF48239">
    <property type="entry name" value="Terpenoid cyclases/Protein prenyltransferases"/>
    <property type="match status" value="1"/>
</dbReference>
<proteinExistence type="evidence at protein level"/>
<comment type="function">
    <text evidence="4 6">Catalyzes the transfer of a geranylgeranyl moiety from geranylgeranyl diphosphate to both cysteines of Rab proteins with the C-terminal sequence -CCXX, CXXX, -XCCX and -XCXC, such as RABA1A, RABA2A, RABF2A and RABG2 (PubMed:26589801). Involved in the geranylgeranylation of RABA2A (PubMed:20180921). In vitro, can prenylate PGGTI targets with the C-terminal sequence Cys-aliphatic-aliphatic-X (CaaX) with leucine in the terminal position. Substrates with the C-terminal sequence -CSIL such as ARAC11/ROP1 or GG2/AGG2 are prenylated independently of REP and when the beta subunit is associated with the alpha subunit RGTA1 (PubMed:26589801).</text>
</comment>
<comment type="function">
    <text evidence="5">Required for male fertility and root tip growth.</text>
</comment>
<comment type="catalytic activity">
    <reaction evidence="6">
        <text>geranylgeranyl diphosphate + L-cysteinyl-[protein] = S-geranylgeranyl-L-cysteinyl-[protein] + diphosphate</text>
        <dbReference type="Rhea" id="RHEA:21240"/>
        <dbReference type="Rhea" id="RHEA-COMP:10131"/>
        <dbReference type="Rhea" id="RHEA-COMP:11537"/>
        <dbReference type="ChEBI" id="CHEBI:29950"/>
        <dbReference type="ChEBI" id="CHEBI:33019"/>
        <dbReference type="ChEBI" id="CHEBI:57533"/>
        <dbReference type="ChEBI" id="CHEBI:86021"/>
        <dbReference type="EC" id="2.5.1.60"/>
    </reaction>
</comment>
<comment type="cofactor">
    <cofactor evidence="2">
        <name>Zn(2+)</name>
        <dbReference type="ChEBI" id="CHEBI:29105"/>
    </cofactor>
    <text evidence="2">Binds 1 zinc ion per subunit.</text>
</comment>
<comment type="cofactor">
    <cofactor evidence="1">
        <name>Mg(2+)</name>
        <dbReference type="ChEBI" id="CHEBI:18420"/>
    </cofactor>
</comment>
<comment type="activity regulation">
    <text evidence="6">The enzymatic reaction requires the aid of the Rab escort protein REP.</text>
</comment>
<comment type="subunit">
    <text evidence="6">Heterotrimer composed of the alpha subunit RGTA, the beta subunit RGTB and REP; within this trimer, RGTA and RGTB form the catalytic component, while REP mediates peptide substrate binding.</text>
</comment>
<comment type="alternative products">
    <event type="alternative splicing"/>
    <isoform>
        <id>Q84J75-1</id>
        <name>1</name>
        <sequence type="displayed"/>
    </isoform>
    <text evidence="8">A number of isoforms are produced. According to EST sequences.</text>
</comment>
<comment type="disruption phenotype">
    <text evidence="4 5">Pleiotropic effects on plant growth and development, including dwarf size, aberrant root development, multiple inflorescence stems and small siliques mostly sterile. Impaired shoot gravitropism and photomorphogenesis (PubMed:20180921). The double mutant plants rgtb1 and rgtb2 are male sterile, due to shrunken pollen with abnormal exine structure, and strong disorganization of the endoplasmic reticulum membranes (PubMed:25316062).</text>
</comment>
<comment type="similarity">
    <text evidence="8">Belongs to the protein prenyltransferase subunit beta family.</text>
</comment>
<comment type="sequence caution" evidence="8">
    <conflict type="erroneous initiation">
        <sequence resource="EMBL-CDS" id="AAM65965"/>
    </conflict>
    <text>Truncated N-terminus.</text>
</comment>
<comment type="sequence caution" evidence="8">
    <conflict type="erroneous initiation">
        <sequence resource="EMBL-CDS" id="BAB10039"/>
    </conflict>
    <text>Truncated N-terminus.</text>
</comment>
<accession>Q84J75</accession>
<accession>Q9FMP2</accession>
<organism>
    <name type="scientific">Arabidopsis thaliana</name>
    <name type="common">Mouse-ear cress</name>
    <dbReference type="NCBI Taxonomy" id="3702"/>
    <lineage>
        <taxon>Eukaryota</taxon>
        <taxon>Viridiplantae</taxon>
        <taxon>Streptophyta</taxon>
        <taxon>Embryophyta</taxon>
        <taxon>Tracheophyta</taxon>
        <taxon>Spermatophyta</taxon>
        <taxon>Magnoliopsida</taxon>
        <taxon>eudicotyledons</taxon>
        <taxon>Gunneridae</taxon>
        <taxon>Pentapetalae</taxon>
        <taxon>rosids</taxon>
        <taxon>malvids</taxon>
        <taxon>Brassicales</taxon>
        <taxon>Brassicaceae</taxon>
        <taxon>Camelineae</taxon>
        <taxon>Arabidopsis</taxon>
    </lineage>
</organism>
<sequence length="321" mass="35496">MSSTSSSQMVQLVADKHVRYILMAEKKKESFESVVMDHLRMNGAYWGLTTLDLLDKLGCVSEEEVISWLMTCQHESGGFAGNTGHDPHILYTLSAVQILALFDKINILDIGKVSSYVAKLQNEDGSFSGDMWGEIDTRFSYIAICCLSILKCLDKINVEKAVKYIVSCKNLDGGFGCTPGAESHAGQIFCCVGALAITGSLHHVDKDSLGWWLCERQLKAGGLNGRPEKLADVCYSWWVLSSLIMIDRVHWIDKAKLVKFILDCQDLDNGGISDRPEDAVDIFHTYFGVAGLSLLEYPGVKVIDPAYALPVDVVNRIIFTK</sequence>
<name>PG2B1_ARATH</name>